<dbReference type="EC" id="2.7.7.2" evidence="1"/>
<dbReference type="EMBL" id="CP002069">
    <property type="protein sequence ID" value="ADI73947.1"/>
    <property type="molecule type" value="Genomic_DNA"/>
</dbReference>
<dbReference type="RefSeq" id="WP_013194514.1">
    <property type="nucleotide sequence ID" value="NC_014253.1"/>
</dbReference>
<dbReference type="SMR" id="D7E8Z9"/>
<dbReference type="STRING" id="644295.Metev_1061"/>
<dbReference type="GeneID" id="9346691"/>
<dbReference type="KEGG" id="mev:Metev_1061"/>
<dbReference type="HOGENOM" id="CLU_034585_2_1_2"/>
<dbReference type="OrthoDB" id="1912at2157"/>
<dbReference type="UniPathway" id="UPA00277">
    <property type="reaction ID" value="UER00407"/>
</dbReference>
<dbReference type="Proteomes" id="UP000000391">
    <property type="component" value="Chromosome"/>
</dbReference>
<dbReference type="GO" id="GO:0005524">
    <property type="term" value="F:ATP binding"/>
    <property type="evidence" value="ECO:0007669"/>
    <property type="project" value="UniProtKB-UniRule"/>
</dbReference>
<dbReference type="GO" id="GO:0003919">
    <property type="term" value="F:FMN adenylyltransferase activity"/>
    <property type="evidence" value="ECO:0007669"/>
    <property type="project" value="UniProtKB-UniRule"/>
</dbReference>
<dbReference type="GO" id="GO:0006747">
    <property type="term" value="P:FAD biosynthetic process"/>
    <property type="evidence" value="ECO:0007669"/>
    <property type="project" value="UniProtKB-UniRule"/>
</dbReference>
<dbReference type="GO" id="GO:0046444">
    <property type="term" value="P:FMN metabolic process"/>
    <property type="evidence" value="ECO:0007669"/>
    <property type="project" value="UniProtKB-UniRule"/>
</dbReference>
<dbReference type="CDD" id="cd02170">
    <property type="entry name" value="cytidylyltransferase"/>
    <property type="match status" value="1"/>
</dbReference>
<dbReference type="Gene3D" id="3.40.50.620">
    <property type="entry name" value="HUPs"/>
    <property type="match status" value="1"/>
</dbReference>
<dbReference type="HAMAP" id="MF_02115">
    <property type="entry name" value="FAD_synth_arch"/>
    <property type="match status" value="1"/>
</dbReference>
<dbReference type="InterPro" id="IPR050385">
    <property type="entry name" value="Archaeal_FAD_synthase"/>
</dbReference>
<dbReference type="InterPro" id="IPR004821">
    <property type="entry name" value="Cyt_trans-like"/>
</dbReference>
<dbReference type="InterPro" id="IPR024902">
    <property type="entry name" value="FAD_synth_RibL"/>
</dbReference>
<dbReference type="InterPro" id="IPR014729">
    <property type="entry name" value="Rossmann-like_a/b/a_fold"/>
</dbReference>
<dbReference type="NCBIfam" id="TIGR00125">
    <property type="entry name" value="cyt_tran_rel"/>
    <property type="match status" value="1"/>
</dbReference>
<dbReference type="PANTHER" id="PTHR43793">
    <property type="entry name" value="FAD SYNTHASE"/>
    <property type="match status" value="1"/>
</dbReference>
<dbReference type="PANTHER" id="PTHR43793:SF1">
    <property type="entry name" value="FAD SYNTHASE"/>
    <property type="match status" value="1"/>
</dbReference>
<dbReference type="Pfam" id="PF01467">
    <property type="entry name" value="CTP_transf_like"/>
    <property type="match status" value="1"/>
</dbReference>
<dbReference type="SUPFAM" id="SSF52374">
    <property type="entry name" value="Nucleotidylyl transferase"/>
    <property type="match status" value="1"/>
</dbReference>
<proteinExistence type="inferred from homology"/>
<reference key="1">
    <citation type="submission" date="2010-06" db="EMBL/GenBank/DDBJ databases">
        <title>Complete sequence chromosome of Methanohalobium evestigatum Z-7303.</title>
        <authorList>
            <consortium name="US DOE Joint Genome Institute"/>
            <person name="Lucas S."/>
            <person name="Copeland A."/>
            <person name="Lapidus A."/>
            <person name="Cheng J.-F."/>
            <person name="Bruce D."/>
            <person name="Goodwin L."/>
            <person name="Pitluck S."/>
            <person name="Saunders E."/>
            <person name="Detter J.C."/>
            <person name="Han C."/>
            <person name="Tapia R."/>
            <person name="Land M."/>
            <person name="Hauser L."/>
            <person name="Kyrpides N."/>
            <person name="Mikhailova N."/>
            <person name="Sieprawska-Lupa M."/>
            <person name="Whitman W.B."/>
            <person name="Anderson I."/>
            <person name="Woyke T."/>
        </authorList>
    </citation>
    <scope>NUCLEOTIDE SEQUENCE [LARGE SCALE GENOMIC DNA]</scope>
    <source>
        <strain>ATCC BAA-1072 / DSM 3721 / NBRC 107634 / OCM 161 / Z-7303</strain>
    </source>
</reference>
<feature type="chain" id="PRO_0000406262" description="FAD synthase">
    <location>
        <begin position="1"/>
        <end position="150"/>
    </location>
</feature>
<feature type="binding site" evidence="1">
    <location>
        <begin position="20"/>
        <end position="21"/>
    </location>
    <ligand>
        <name>ATP</name>
        <dbReference type="ChEBI" id="CHEBI:30616"/>
    </ligand>
</feature>
<feature type="binding site" evidence="1">
    <location>
        <begin position="25"/>
        <end position="28"/>
    </location>
    <ligand>
        <name>ATP</name>
        <dbReference type="ChEBI" id="CHEBI:30616"/>
    </ligand>
</feature>
<feature type="binding site" evidence="1">
    <location>
        <position position="103"/>
    </location>
    <ligand>
        <name>ATP</name>
        <dbReference type="ChEBI" id="CHEBI:30616"/>
    </ligand>
</feature>
<accession>D7E8Z9</accession>
<evidence type="ECO:0000255" key="1">
    <source>
        <dbReference type="HAMAP-Rule" id="MF_02115"/>
    </source>
</evidence>
<organism>
    <name type="scientific">Methanohalobium evestigatum (strain ATCC BAA-1072 / DSM 3721 / NBRC 107634 / OCM 161 / Z-7303)</name>
    <dbReference type="NCBI Taxonomy" id="644295"/>
    <lineage>
        <taxon>Archaea</taxon>
        <taxon>Methanobacteriati</taxon>
        <taxon>Methanobacteriota</taxon>
        <taxon>Stenosarchaea group</taxon>
        <taxon>Methanomicrobia</taxon>
        <taxon>Methanosarcinales</taxon>
        <taxon>Methanosarcinaceae</taxon>
        <taxon>Methanohalobium</taxon>
    </lineage>
</organism>
<protein>
    <recommendedName>
        <fullName evidence="1">FAD synthase</fullName>
        <ecNumber evidence="1">2.7.7.2</ecNumber>
    </recommendedName>
    <alternativeName>
        <fullName evidence="1">FMN adenylyltransferase</fullName>
    </alternativeName>
    <alternativeName>
        <fullName evidence="1">Flavin adenine dinucleotide synthase</fullName>
    </alternativeName>
</protein>
<comment type="function">
    <text evidence="1">Catalyzes the transfer of the AMP portion of ATP to flavin mononucleotide (FMN) to produce flavin adenine dinucleotide (FAD) coenzyme.</text>
</comment>
<comment type="catalytic activity">
    <reaction evidence="1">
        <text>FMN + ATP + H(+) = FAD + diphosphate</text>
        <dbReference type="Rhea" id="RHEA:17237"/>
        <dbReference type="ChEBI" id="CHEBI:15378"/>
        <dbReference type="ChEBI" id="CHEBI:30616"/>
        <dbReference type="ChEBI" id="CHEBI:33019"/>
        <dbReference type="ChEBI" id="CHEBI:57692"/>
        <dbReference type="ChEBI" id="CHEBI:58210"/>
        <dbReference type="EC" id="2.7.7.2"/>
    </reaction>
</comment>
<comment type="cofactor">
    <cofactor evidence="1">
        <name>a divalent metal cation</name>
        <dbReference type="ChEBI" id="CHEBI:60240"/>
    </cofactor>
</comment>
<comment type="pathway">
    <text evidence="1">Cofactor biosynthesis; FAD biosynthesis; FAD from FMN: step 1/1.</text>
</comment>
<comment type="subunit">
    <text evidence="1">Homodimer.</text>
</comment>
<comment type="similarity">
    <text evidence="1">Belongs to the archaeal FAD synthase family.</text>
</comment>
<name>RIBL_METEZ</name>
<sequence>MSLLKLCKGDLLTRVLATGTFDLLHPGHLHYLSEARKLGNELYVIVARESMIKHKPKPVIPENQRVTMVNSLDVVDKAVLGSETNIYEPIKNIKPDVITIGYDQKFSSDSIEKNLEELGINAKVVRINKLSDCSLCSSGKIIDRILERYC</sequence>
<keyword id="KW-0067">ATP-binding</keyword>
<keyword id="KW-0274">FAD</keyword>
<keyword id="KW-0285">Flavoprotein</keyword>
<keyword id="KW-0288">FMN</keyword>
<keyword id="KW-0547">Nucleotide-binding</keyword>
<keyword id="KW-0548">Nucleotidyltransferase</keyword>
<keyword id="KW-1185">Reference proteome</keyword>
<keyword id="KW-0808">Transferase</keyword>
<gene>
    <name evidence="1" type="primary">ribL</name>
    <name type="ordered locus">Metev_1061</name>
</gene>